<proteinExistence type="evidence at protein level"/>
<name>PSN2_MOUSE</name>
<sequence length="448" mass="49983">MLAFMASDSEEEVCDERTSLMSAESPTSRSCQEGRPGPEDGESTAQWRTQESEEDCEEDPDRYACSGAPGRPSGLEEELTLKYGAKRVIMLFVPVTLCMIVVVATIKSVRFYTEKNGQLIYTPFTEDTPSVGQRLLNSVLNTLIMISVIVVMTIFLVVLYKYRCYKFIHGWLIMSSLMLLFLFTYIYLGEVLKTYNVAMDYPTLFLAVWNFGAVGMVCIHWKGPLVLQQAYLIVISALMALVFIKYLPEWSAWVILGAISVYDLVAVLCPKGPLRMLVETAQERNEPIFPALIYSSAMVWTVGMAKLDPSSQGALQLPYDPEMEEDSYDSFGEPSYPEAFEAPLPGYPGEELEEEEERGVKLGLGDFIFYSVLVGKAAATGNGDWNTTLACFIAILIGLCLTLLLLAVFKKALPALPISITFGLIFYFSTDNLVRPFMDTLASHQLYI</sequence>
<organism>
    <name type="scientific">Mus musculus</name>
    <name type="common">Mouse</name>
    <dbReference type="NCBI Taxonomy" id="10090"/>
    <lineage>
        <taxon>Eukaryota</taxon>
        <taxon>Metazoa</taxon>
        <taxon>Chordata</taxon>
        <taxon>Craniata</taxon>
        <taxon>Vertebrata</taxon>
        <taxon>Euteleostomi</taxon>
        <taxon>Mammalia</taxon>
        <taxon>Eutheria</taxon>
        <taxon>Euarchontoglires</taxon>
        <taxon>Glires</taxon>
        <taxon>Rodentia</taxon>
        <taxon>Myomorpha</taxon>
        <taxon>Muroidea</taxon>
        <taxon>Muridae</taxon>
        <taxon>Murinae</taxon>
        <taxon>Mus</taxon>
        <taxon>Mus</taxon>
    </lineage>
</organism>
<reference key="1">
    <citation type="journal article" date="1996" name="J. Biol. Chem.">
        <title>Requirement of the familial Alzheimer's disease gene PS2 for apoptosis. Opposing effect of ALG-3.</title>
        <authorList>
            <person name="Vito P."/>
            <person name="Wolozin B."/>
            <person name="Ganjei J.K."/>
            <person name="Iwasaki K."/>
            <person name="Lacana E."/>
            <person name="D'Adamio L."/>
        </authorList>
    </citation>
    <scope>NUCLEOTIDE SEQUENCE [MRNA] (ISOFORM 1)</scope>
    <source>
        <tissue>Liver</tissue>
    </source>
</reference>
<reference key="2">
    <citation type="submission" date="1997-12" db="EMBL/GenBank/DDBJ databases">
        <title>Molecular cloning of mouse presenilin 2 gene.</title>
        <authorList>
            <person name="Sahara N."/>
            <person name="Mori H."/>
            <person name="Shirasawa T."/>
        </authorList>
    </citation>
    <scope>NUCLEOTIDE SEQUENCE [MRNA] (ISOFORM 1)</scope>
    <source>
        <strain>NIH Swiss</strain>
    </source>
</reference>
<reference key="3">
    <citation type="journal article" date="2005" name="Science">
        <title>The transcriptional landscape of the mammalian genome.</title>
        <authorList>
            <person name="Carninci P."/>
            <person name="Kasukawa T."/>
            <person name="Katayama S."/>
            <person name="Gough J."/>
            <person name="Frith M.C."/>
            <person name="Maeda N."/>
            <person name="Oyama R."/>
            <person name="Ravasi T."/>
            <person name="Lenhard B."/>
            <person name="Wells C."/>
            <person name="Kodzius R."/>
            <person name="Shimokawa K."/>
            <person name="Bajic V.B."/>
            <person name="Brenner S.E."/>
            <person name="Batalov S."/>
            <person name="Forrest A.R."/>
            <person name="Zavolan M."/>
            <person name="Davis M.J."/>
            <person name="Wilming L.G."/>
            <person name="Aidinis V."/>
            <person name="Allen J.E."/>
            <person name="Ambesi-Impiombato A."/>
            <person name="Apweiler R."/>
            <person name="Aturaliya R.N."/>
            <person name="Bailey T.L."/>
            <person name="Bansal M."/>
            <person name="Baxter L."/>
            <person name="Beisel K.W."/>
            <person name="Bersano T."/>
            <person name="Bono H."/>
            <person name="Chalk A.M."/>
            <person name="Chiu K.P."/>
            <person name="Choudhary V."/>
            <person name="Christoffels A."/>
            <person name="Clutterbuck D.R."/>
            <person name="Crowe M.L."/>
            <person name="Dalla E."/>
            <person name="Dalrymple B.P."/>
            <person name="de Bono B."/>
            <person name="Della Gatta G."/>
            <person name="di Bernardo D."/>
            <person name="Down T."/>
            <person name="Engstrom P."/>
            <person name="Fagiolini M."/>
            <person name="Faulkner G."/>
            <person name="Fletcher C.F."/>
            <person name="Fukushima T."/>
            <person name="Furuno M."/>
            <person name="Futaki S."/>
            <person name="Gariboldi M."/>
            <person name="Georgii-Hemming P."/>
            <person name="Gingeras T.R."/>
            <person name="Gojobori T."/>
            <person name="Green R.E."/>
            <person name="Gustincich S."/>
            <person name="Harbers M."/>
            <person name="Hayashi Y."/>
            <person name="Hensch T.K."/>
            <person name="Hirokawa N."/>
            <person name="Hill D."/>
            <person name="Huminiecki L."/>
            <person name="Iacono M."/>
            <person name="Ikeo K."/>
            <person name="Iwama A."/>
            <person name="Ishikawa T."/>
            <person name="Jakt M."/>
            <person name="Kanapin A."/>
            <person name="Katoh M."/>
            <person name="Kawasawa Y."/>
            <person name="Kelso J."/>
            <person name="Kitamura H."/>
            <person name="Kitano H."/>
            <person name="Kollias G."/>
            <person name="Krishnan S.P."/>
            <person name="Kruger A."/>
            <person name="Kummerfeld S.K."/>
            <person name="Kurochkin I.V."/>
            <person name="Lareau L.F."/>
            <person name="Lazarevic D."/>
            <person name="Lipovich L."/>
            <person name="Liu J."/>
            <person name="Liuni S."/>
            <person name="McWilliam S."/>
            <person name="Madan Babu M."/>
            <person name="Madera M."/>
            <person name="Marchionni L."/>
            <person name="Matsuda H."/>
            <person name="Matsuzawa S."/>
            <person name="Miki H."/>
            <person name="Mignone F."/>
            <person name="Miyake S."/>
            <person name="Morris K."/>
            <person name="Mottagui-Tabar S."/>
            <person name="Mulder N."/>
            <person name="Nakano N."/>
            <person name="Nakauchi H."/>
            <person name="Ng P."/>
            <person name="Nilsson R."/>
            <person name="Nishiguchi S."/>
            <person name="Nishikawa S."/>
            <person name="Nori F."/>
            <person name="Ohara O."/>
            <person name="Okazaki Y."/>
            <person name="Orlando V."/>
            <person name="Pang K.C."/>
            <person name="Pavan W.J."/>
            <person name="Pavesi G."/>
            <person name="Pesole G."/>
            <person name="Petrovsky N."/>
            <person name="Piazza S."/>
            <person name="Reed J."/>
            <person name="Reid J.F."/>
            <person name="Ring B.Z."/>
            <person name="Ringwald M."/>
            <person name="Rost B."/>
            <person name="Ruan Y."/>
            <person name="Salzberg S.L."/>
            <person name="Sandelin A."/>
            <person name="Schneider C."/>
            <person name="Schoenbach C."/>
            <person name="Sekiguchi K."/>
            <person name="Semple C.A."/>
            <person name="Seno S."/>
            <person name="Sessa L."/>
            <person name="Sheng Y."/>
            <person name="Shibata Y."/>
            <person name="Shimada H."/>
            <person name="Shimada K."/>
            <person name="Silva D."/>
            <person name="Sinclair B."/>
            <person name="Sperling S."/>
            <person name="Stupka E."/>
            <person name="Sugiura K."/>
            <person name="Sultana R."/>
            <person name="Takenaka Y."/>
            <person name="Taki K."/>
            <person name="Tammoja K."/>
            <person name="Tan S.L."/>
            <person name="Tang S."/>
            <person name="Taylor M.S."/>
            <person name="Tegner J."/>
            <person name="Teichmann S.A."/>
            <person name="Ueda H.R."/>
            <person name="van Nimwegen E."/>
            <person name="Verardo R."/>
            <person name="Wei C.L."/>
            <person name="Yagi K."/>
            <person name="Yamanishi H."/>
            <person name="Zabarovsky E."/>
            <person name="Zhu S."/>
            <person name="Zimmer A."/>
            <person name="Hide W."/>
            <person name="Bult C."/>
            <person name="Grimmond S.M."/>
            <person name="Teasdale R.D."/>
            <person name="Liu E.T."/>
            <person name="Brusic V."/>
            <person name="Quackenbush J."/>
            <person name="Wahlestedt C."/>
            <person name="Mattick J.S."/>
            <person name="Hume D.A."/>
            <person name="Kai C."/>
            <person name="Sasaki D."/>
            <person name="Tomaru Y."/>
            <person name="Fukuda S."/>
            <person name="Kanamori-Katayama M."/>
            <person name="Suzuki M."/>
            <person name="Aoki J."/>
            <person name="Arakawa T."/>
            <person name="Iida J."/>
            <person name="Imamura K."/>
            <person name="Itoh M."/>
            <person name="Kato T."/>
            <person name="Kawaji H."/>
            <person name="Kawagashira N."/>
            <person name="Kawashima T."/>
            <person name="Kojima M."/>
            <person name="Kondo S."/>
            <person name="Konno H."/>
            <person name="Nakano K."/>
            <person name="Ninomiya N."/>
            <person name="Nishio T."/>
            <person name="Okada M."/>
            <person name="Plessy C."/>
            <person name="Shibata K."/>
            <person name="Shiraki T."/>
            <person name="Suzuki S."/>
            <person name="Tagami M."/>
            <person name="Waki K."/>
            <person name="Watahiki A."/>
            <person name="Okamura-Oho Y."/>
            <person name="Suzuki H."/>
            <person name="Kawai J."/>
            <person name="Hayashizaki Y."/>
        </authorList>
    </citation>
    <scope>NUCLEOTIDE SEQUENCE [LARGE SCALE MRNA] (ISOFORM 2)</scope>
    <source>
        <strain>C57BL/6J</strain>
        <tissue>Head</tissue>
    </source>
</reference>
<reference key="4">
    <citation type="journal article" date="2004" name="Genome Res.">
        <title>The status, quality, and expansion of the NIH full-length cDNA project: the Mammalian Gene Collection (MGC).</title>
        <authorList>
            <consortium name="The MGC Project Team"/>
        </authorList>
    </citation>
    <scope>NUCLEOTIDE SEQUENCE [LARGE SCALE MRNA] (ISOFORM 1)</scope>
    <source>
        <tissue>Mammary tumor</tissue>
    </source>
</reference>
<reference key="5">
    <citation type="journal article" date="1996" name="Science">
        <title>Interfering with apoptosis: Ca(2+)-binding protein ALG-2 and Alzheimer's disease gene ALG-3.</title>
        <authorList>
            <person name="Vito P."/>
            <person name="Lacana E."/>
            <person name="D'Adamio L."/>
        </authorList>
    </citation>
    <scope>NUCLEOTIDE SEQUENCE [MRNA] OF 340-448 (ISOFORM 1)</scope>
    <source>
        <tissue>Liver</tissue>
    </source>
</reference>
<reference key="6">
    <citation type="journal article" date="2002" name="J. Cell Biol.">
        <title>A novel mechanism for the regulation of amyloid precursor protein metabolism.</title>
        <authorList>
            <person name="Chen Q."/>
            <person name="Kimura H."/>
            <person name="Schubert D."/>
        </authorList>
    </citation>
    <scope>INTERACTION WITH DOCK3</scope>
</reference>
<reference key="7">
    <citation type="journal article" date="2006" name="Cell">
        <title>Presenilins form ER Ca2+ leak channels, a function disrupted by familial Alzheimer's disease-linked mutations.</title>
        <authorList>
            <person name="Tu H."/>
            <person name="Nelson O."/>
            <person name="Bezprozvanny A."/>
            <person name="Wang Z."/>
            <person name="Lee S.F."/>
            <person name="Hao Y.H."/>
            <person name="Serneels L."/>
            <person name="De Strooper B."/>
            <person name="Yu G."/>
            <person name="Bezprozvanny I."/>
        </authorList>
    </citation>
    <scope>FUNCTION</scope>
</reference>
<reference key="8">
    <citation type="journal article" date="2007" name="Proc. Natl. Acad. Sci. U.S.A.">
        <title>Large-scale phosphorylation analysis of mouse liver.</title>
        <authorList>
            <person name="Villen J."/>
            <person name="Beausoleil S.A."/>
            <person name="Gerber S.A."/>
            <person name="Gygi S.P."/>
        </authorList>
    </citation>
    <scope>PHOSPHORYLATION [LARGE SCALE ANALYSIS] AT SER-52</scope>
    <scope>IDENTIFICATION BY MASS SPECTROMETRY [LARGE SCALE ANALYSIS]</scope>
    <source>
        <tissue>Liver</tissue>
    </source>
</reference>
<reference key="9">
    <citation type="journal article" date="2009" name="Immunity">
        <title>The phagosomal proteome in interferon-gamma-activated macrophages.</title>
        <authorList>
            <person name="Trost M."/>
            <person name="English L."/>
            <person name="Lemieux S."/>
            <person name="Courcelles M."/>
            <person name="Desjardins M."/>
            <person name="Thibault P."/>
        </authorList>
    </citation>
    <scope>PHOSPHORYLATION [LARGE SCALE ANALYSIS] AT SER-52</scope>
    <scope>IDENTIFICATION BY MASS SPECTROMETRY [LARGE SCALE ANALYSIS]</scope>
</reference>
<reference key="10">
    <citation type="journal article" date="2010" name="Cell">
        <title>A tissue-specific atlas of mouse protein phosphorylation and expression.</title>
        <authorList>
            <person name="Huttlin E.L."/>
            <person name="Jedrychowski M.P."/>
            <person name="Elias J.E."/>
            <person name="Goswami T."/>
            <person name="Rad R."/>
            <person name="Beausoleil S.A."/>
            <person name="Villen J."/>
            <person name="Haas W."/>
            <person name="Sowa M.E."/>
            <person name="Gygi S.P."/>
        </authorList>
    </citation>
    <scope>PHOSPHORYLATION [LARGE SCALE ANALYSIS] AT SER-22; SER-25; SER-30 AND SER-52</scope>
    <scope>IDENTIFICATION BY MASS SPECTROMETRY [LARGE SCALE ANALYSIS]</scope>
    <source>
        <tissue>Brain</tissue>
        <tissue>Kidney</tissue>
        <tissue>Lung</tissue>
        <tissue>Spleen</tissue>
    </source>
</reference>
<keyword id="KW-0025">Alternative splicing</keyword>
<keyword id="KW-0256">Endoplasmic reticulum</keyword>
<keyword id="KW-0333">Golgi apparatus</keyword>
<keyword id="KW-0378">Hydrolase</keyword>
<keyword id="KW-0472">Membrane</keyword>
<keyword id="KW-0914">Notch signaling pathway</keyword>
<keyword id="KW-0597">Phosphoprotein</keyword>
<keyword id="KW-0645">Protease</keyword>
<keyword id="KW-1185">Reference proteome</keyword>
<keyword id="KW-0812">Transmembrane</keyword>
<keyword id="KW-1133">Transmembrane helix</keyword>
<dbReference type="EC" id="3.4.23.-"/>
<dbReference type="EMBL" id="U57324">
    <property type="protein sequence ID" value="AAC52937.1"/>
    <property type="molecule type" value="mRNA"/>
</dbReference>
<dbReference type="EMBL" id="U57325">
    <property type="protein sequence ID" value="AAC53311.1"/>
    <property type="molecule type" value="mRNA"/>
</dbReference>
<dbReference type="EMBL" id="AF038935">
    <property type="protein sequence ID" value="AAB92660.1"/>
    <property type="molecule type" value="mRNA"/>
</dbReference>
<dbReference type="EMBL" id="AK014706">
    <property type="protein sequence ID" value="BAB29514.1"/>
    <property type="molecule type" value="mRNA"/>
</dbReference>
<dbReference type="EMBL" id="BC010403">
    <property type="protein sequence ID" value="AAH10403.1"/>
    <property type="molecule type" value="mRNA"/>
</dbReference>
<dbReference type="EMBL" id="U49111">
    <property type="protein sequence ID" value="AAC52935.1"/>
    <property type="molecule type" value="mRNA"/>
</dbReference>
<dbReference type="CCDS" id="CCDS15567.1">
    <molecule id="Q61144-1"/>
</dbReference>
<dbReference type="RefSeq" id="NP_001122077.1">
    <property type="nucleotide sequence ID" value="NM_001128605.1"/>
</dbReference>
<dbReference type="RefSeq" id="NP_035313.2">
    <property type="nucleotide sequence ID" value="NM_011183.3"/>
</dbReference>
<dbReference type="RefSeq" id="XP_006496775.1">
    <property type="nucleotide sequence ID" value="XM_006496712.2"/>
</dbReference>
<dbReference type="RefSeq" id="XP_011237078.1">
    <property type="nucleotide sequence ID" value="XM_011238776.2"/>
</dbReference>
<dbReference type="SMR" id="Q61144"/>
<dbReference type="BioGRID" id="202415">
    <property type="interactions" value="11"/>
</dbReference>
<dbReference type="ComplexPortal" id="CPX-4236">
    <property type="entry name" value="Gamma-secretase complex, Aph1a-Psen2 variant"/>
</dbReference>
<dbReference type="ComplexPortal" id="CPX-4237">
    <property type="entry name" value="Gamma-secretase complex, Aph1b-Psen2 variant"/>
</dbReference>
<dbReference type="FunCoup" id="Q61144">
    <property type="interactions" value="471"/>
</dbReference>
<dbReference type="IntAct" id="Q61144">
    <property type="interactions" value="3"/>
</dbReference>
<dbReference type="MINT" id="Q61144"/>
<dbReference type="STRING" id="10090.ENSMUSP00000106735"/>
<dbReference type="MEROPS" id="A22.002"/>
<dbReference type="GlyGen" id="Q61144">
    <property type="glycosylation" value="1 site, 1 O-linked glycan (1 site)"/>
</dbReference>
<dbReference type="iPTMnet" id="Q61144"/>
<dbReference type="PhosphoSitePlus" id="Q61144"/>
<dbReference type="SwissPalm" id="Q61144"/>
<dbReference type="jPOST" id="Q61144"/>
<dbReference type="PaxDb" id="10090-ENSMUSP00000010753"/>
<dbReference type="PeptideAtlas" id="Q61144"/>
<dbReference type="ProteomicsDB" id="301997">
    <molecule id="Q61144-1"/>
</dbReference>
<dbReference type="ProteomicsDB" id="301998">
    <molecule id="Q61144-2"/>
</dbReference>
<dbReference type="DNASU" id="19165"/>
<dbReference type="GeneID" id="19165"/>
<dbReference type="KEGG" id="mmu:19165"/>
<dbReference type="UCSC" id="uc007dwe.1">
    <molecule id="Q61144-2"/>
    <property type="organism name" value="mouse"/>
</dbReference>
<dbReference type="AGR" id="MGI:109284"/>
<dbReference type="CTD" id="5664"/>
<dbReference type="MGI" id="MGI:109284">
    <property type="gene designation" value="Psen2"/>
</dbReference>
<dbReference type="eggNOG" id="KOG2736">
    <property type="taxonomic scope" value="Eukaryota"/>
</dbReference>
<dbReference type="InParanoid" id="Q61144"/>
<dbReference type="OrthoDB" id="59642at9989"/>
<dbReference type="PhylomeDB" id="Q61144"/>
<dbReference type="Reactome" id="R-MMU-1251985">
    <property type="pathway name" value="Nuclear signaling by ERBB4"/>
</dbReference>
<dbReference type="Reactome" id="R-MMU-193692">
    <property type="pathway name" value="Regulated proteolysis of p75NTR"/>
</dbReference>
<dbReference type="Reactome" id="R-MMU-205043">
    <property type="pathway name" value="NRIF signals cell death from the nucleus"/>
</dbReference>
<dbReference type="Reactome" id="R-MMU-3928665">
    <property type="pathway name" value="EPH-ephrin mediated repulsion of cells"/>
</dbReference>
<dbReference type="Reactome" id="R-MMU-9013507">
    <property type="pathway name" value="NOTCH3 Activation and Transmission of Signal to the Nucleus"/>
</dbReference>
<dbReference type="Reactome" id="R-MMU-9017802">
    <property type="pathway name" value="Noncanonical activation of NOTCH3"/>
</dbReference>
<dbReference type="Reactome" id="R-MMU-9839383">
    <property type="pathway name" value="TGFBR3 PTM regulation"/>
</dbReference>
<dbReference type="BioGRID-ORCS" id="19165">
    <property type="hits" value="1 hit in 77 CRISPR screens"/>
</dbReference>
<dbReference type="ChiTaRS" id="Psen2">
    <property type="organism name" value="mouse"/>
</dbReference>
<dbReference type="PRO" id="PR:Q61144"/>
<dbReference type="Proteomes" id="UP000000589">
    <property type="component" value="Unplaced"/>
</dbReference>
<dbReference type="RNAct" id="Q61144">
    <property type="molecule type" value="protein"/>
</dbReference>
<dbReference type="GO" id="GO:0036064">
    <property type="term" value="C:ciliary basal body"/>
    <property type="evidence" value="ECO:0000314"/>
    <property type="project" value="MGI"/>
</dbReference>
<dbReference type="GO" id="GO:0005829">
    <property type="term" value="C:cytosol"/>
    <property type="evidence" value="ECO:0000314"/>
    <property type="project" value="MGI"/>
</dbReference>
<dbReference type="GO" id="GO:0005783">
    <property type="term" value="C:endoplasmic reticulum"/>
    <property type="evidence" value="ECO:0000314"/>
    <property type="project" value="MGI"/>
</dbReference>
<dbReference type="GO" id="GO:0005789">
    <property type="term" value="C:endoplasmic reticulum membrane"/>
    <property type="evidence" value="ECO:0007669"/>
    <property type="project" value="UniProtKB-SubCell"/>
</dbReference>
<dbReference type="GO" id="GO:0070765">
    <property type="term" value="C:gamma-secretase complex"/>
    <property type="evidence" value="ECO:0000314"/>
    <property type="project" value="MGI"/>
</dbReference>
<dbReference type="GO" id="GO:0098978">
    <property type="term" value="C:glutamatergic synapse"/>
    <property type="evidence" value="ECO:0000314"/>
    <property type="project" value="SynGO"/>
</dbReference>
<dbReference type="GO" id="GO:0005794">
    <property type="term" value="C:Golgi apparatus"/>
    <property type="evidence" value="ECO:0000250"/>
    <property type="project" value="HGNC-UCL"/>
</dbReference>
<dbReference type="GO" id="GO:0000139">
    <property type="term" value="C:Golgi membrane"/>
    <property type="evidence" value="ECO:0007669"/>
    <property type="project" value="UniProtKB-SubCell"/>
</dbReference>
<dbReference type="GO" id="GO:0016020">
    <property type="term" value="C:membrane"/>
    <property type="evidence" value="ECO:0000314"/>
    <property type="project" value="MGI"/>
</dbReference>
<dbReference type="GO" id="GO:0043025">
    <property type="term" value="C:neuronal cell body"/>
    <property type="evidence" value="ECO:0000314"/>
    <property type="project" value="MGI"/>
</dbReference>
<dbReference type="GO" id="GO:0005886">
    <property type="term" value="C:plasma membrane"/>
    <property type="evidence" value="ECO:0000250"/>
    <property type="project" value="HGNC-UCL"/>
</dbReference>
<dbReference type="GO" id="GO:0098794">
    <property type="term" value="C:postsynapse"/>
    <property type="evidence" value="ECO:0007669"/>
    <property type="project" value="GOC"/>
</dbReference>
<dbReference type="GO" id="GO:0030018">
    <property type="term" value="C:Z disc"/>
    <property type="evidence" value="ECO:0000314"/>
    <property type="project" value="MGI"/>
</dbReference>
<dbReference type="GO" id="GO:0042500">
    <property type="term" value="F:aspartic endopeptidase activity, intramembrane cleaving"/>
    <property type="evidence" value="ECO:0000315"/>
    <property type="project" value="MGI"/>
</dbReference>
<dbReference type="GO" id="GO:0004175">
    <property type="term" value="F:endopeptidase activity"/>
    <property type="evidence" value="ECO:0000315"/>
    <property type="project" value="MGI"/>
</dbReference>
<dbReference type="GO" id="GO:0042987">
    <property type="term" value="P:amyloid precursor protein catabolic process"/>
    <property type="evidence" value="ECO:0007669"/>
    <property type="project" value="InterPro"/>
</dbReference>
<dbReference type="GO" id="GO:0050435">
    <property type="term" value="P:amyloid-beta metabolic process"/>
    <property type="evidence" value="ECO:0000314"/>
    <property type="project" value="MGI"/>
</dbReference>
<dbReference type="GO" id="GO:0097190">
    <property type="term" value="P:apoptotic signaling pathway"/>
    <property type="evidence" value="ECO:0000316"/>
    <property type="project" value="MGI"/>
</dbReference>
<dbReference type="GO" id="GO:0048854">
    <property type="term" value="P:brain morphogenesis"/>
    <property type="evidence" value="ECO:0000316"/>
    <property type="project" value="MGI"/>
</dbReference>
<dbReference type="GO" id="GO:0006816">
    <property type="term" value="P:calcium ion transport"/>
    <property type="evidence" value="ECO:0000353"/>
    <property type="project" value="MGI"/>
</dbReference>
<dbReference type="GO" id="GO:0060048">
    <property type="term" value="P:cardiac muscle contraction"/>
    <property type="evidence" value="ECO:0000315"/>
    <property type="project" value="MGI"/>
</dbReference>
<dbReference type="GO" id="GO:0001708">
    <property type="term" value="P:cell fate specification"/>
    <property type="evidence" value="ECO:0000316"/>
    <property type="project" value="MGI"/>
</dbReference>
<dbReference type="GO" id="GO:0021904">
    <property type="term" value="P:dorsal/ventral neural tube patterning"/>
    <property type="evidence" value="ECO:0000316"/>
    <property type="project" value="MGI"/>
</dbReference>
<dbReference type="GO" id="GO:0030326">
    <property type="term" value="P:embryonic limb morphogenesis"/>
    <property type="evidence" value="ECO:0000316"/>
    <property type="project" value="MGI"/>
</dbReference>
<dbReference type="GO" id="GO:0032469">
    <property type="term" value="P:endoplasmic reticulum calcium ion homeostasis"/>
    <property type="evidence" value="ECO:0000316"/>
    <property type="project" value="MGI"/>
</dbReference>
<dbReference type="GO" id="GO:0030900">
    <property type="term" value="P:forebrain development"/>
    <property type="evidence" value="ECO:0000316"/>
    <property type="project" value="MGI"/>
</dbReference>
<dbReference type="GO" id="GO:0001942">
    <property type="term" value="P:hair follicle development"/>
    <property type="evidence" value="ECO:0000316"/>
    <property type="project" value="MGI"/>
</dbReference>
<dbReference type="GO" id="GO:0002244">
    <property type="term" value="P:hematopoietic progenitor cell differentiation"/>
    <property type="evidence" value="ECO:0000316"/>
    <property type="project" value="MGI"/>
</dbReference>
<dbReference type="GO" id="GO:0035556">
    <property type="term" value="P:intracellular signal transduction"/>
    <property type="evidence" value="ECO:0007669"/>
    <property type="project" value="InterPro"/>
</dbReference>
<dbReference type="GO" id="GO:0007611">
    <property type="term" value="P:learning or memory"/>
    <property type="evidence" value="ECO:0000316"/>
    <property type="project" value="MGI"/>
</dbReference>
<dbReference type="GO" id="GO:0040011">
    <property type="term" value="P:locomotion"/>
    <property type="evidence" value="ECO:0000316"/>
    <property type="project" value="MGI"/>
</dbReference>
<dbReference type="GO" id="GO:0048286">
    <property type="term" value="P:lung alveolus development"/>
    <property type="evidence" value="ECO:0000315"/>
    <property type="project" value="MGI"/>
</dbReference>
<dbReference type="GO" id="GO:0006509">
    <property type="term" value="P:membrane protein ectodomain proteolysis"/>
    <property type="evidence" value="ECO:0000250"/>
    <property type="project" value="HGNC-UCL"/>
</dbReference>
<dbReference type="GO" id="GO:0007613">
    <property type="term" value="P:memory"/>
    <property type="evidence" value="ECO:0000316"/>
    <property type="project" value="MGI"/>
</dbReference>
<dbReference type="GO" id="GO:1990456">
    <property type="term" value="P:mitochondrion-endoplasmic reticulum membrane tethering"/>
    <property type="evidence" value="ECO:0000250"/>
    <property type="project" value="UniProtKB"/>
</dbReference>
<dbReference type="GO" id="GO:0002573">
    <property type="term" value="P:myeloid leukocyte differentiation"/>
    <property type="evidence" value="ECO:0000316"/>
    <property type="project" value="MGI"/>
</dbReference>
<dbReference type="GO" id="GO:2001234">
    <property type="term" value="P:negative regulation of apoptotic signaling pathway"/>
    <property type="evidence" value="ECO:0000316"/>
    <property type="project" value="MGI"/>
</dbReference>
<dbReference type="GO" id="GO:0042059">
    <property type="term" value="P:negative regulation of epidermal growth factor receptor signaling pathway"/>
    <property type="evidence" value="ECO:0000315"/>
    <property type="project" value="BHF-UCL"/>
</dbReference>
<dbReference type="GO" id="GO:0031333">
    <property type="term" value="P:negative regulation of protein-containing complex assembly"/>
    <property type="evidence" value="ECO:0000314"/>
    <property type="project" value="MGI"/>
</dbReference>
<dbReference type="GO" id="GO:0000122">
    <property type="term" value="P:negative regulation of transcription by RNA polymerase II"/>
    <property type="evidence" value="ECO:0000315"/>
    <property type="project" value="BHF-UCL"/>
</dbReference>
<dbReference type="GO" id="GO:2000059">
    <property type="term" value="P:negative regulation of ubiquitin-dependent protein catabolic process"/>
    <property type="evidence" value="ECO:0000315"/>
    <property type="project" value="BHF-UCL"/>
</dbReference>
<dbReference type="GO" id="GO:0150076">
    <property type="term" value="P:neuroinflammatory response"/>
    <property type="evidence" value="ECO:0000315"/>
    <property type="project" value="MGI"/>
</dbReference>
<dbReference type="GO" id="GO:0070050">
    <property type="term" value="P:neuron cellular homeostasis"/>
    <property type="evidence" value="ECO:0000316"/>
    <property type="project" value="CACAO"/>
</dbReference>
<dbReference type="GO" id="GO:0007219">
    <property type="term" value="P:Notch signaling pathway"/>
    <property type="evidence" value="ECO:0000316"/>
    <property type="project" value="MGI"/>
</dbReference>
<dbReference type="GO" id="GO:0043065">
    <property type="term" value="P:positive regulation of apoptotic process"/>
    <property type="evidence" value="ECO:0000316"/>
    <property type="project" value="MGI"/>
</dbReference>
<dbReference type="GO" id="GO:0050820">
    <property type="term" value="P:positive regulation of coagulation"/>
    <property type="evidence" value="ECO:0000315"/>
    <property type="project" value="MGI"/>
</dbReference>
<dbReference type="GO" id="GO:1902043">
    <property type="term" value="P:positive regulation of extrinsic apoptotic signaling pathway via death domain receptors"/>
    <property type="evidence" value="ECO:0000314"/>
    <property type="project" value="MGI"/>
</dbReference>
<dbReference type="GO" id="GO:0032436">
    <property type="term" value="P:positive regulation of proteasomal ubiquitin-dependent protein catabolic process"/>
    <property type="evidence" value="ECO:0000315"/>
    <property type="project" value="BHF-UCL"/>
</dbReference>
<dbReference type="GO" id="GO:0001921">
    <property type="term" value="P:positive regulation of receptor recycling"/>
    <property type="evidence" value="ECO:0000315"/>
    <property type="project" value="BHF-UCL"/>
</dbReference>
<dbReference type="GO" id="GO:0140249">
    <property type="term" value="P:protein catabolic process at postsynapse"/>
    <property type="evidence" value="ECO:0000314"/>
    <property type="project" value="SynGO"/>
</dbReference>
<dbReference type="GO" id="GO:0051604">
    <property type="term" value="P:protein maturation"/>
    <property type="evidence" value="ECO:0000316"/>
    <property type="project" value="MGI"/>
</dbReference>
<dbReference type="GO" id="GO:0016485">
    <property type="term" value="P:protein processing"/>
    <property type="evidence" value="ECO:0000316"/>
    <property type="project" value="MGI"/>
</dbReference>
<dbReference type="GO" id="GO:0015031">
    <property type="term" value="P:protein transport"/>
    <property type="evidence" value="ECO:0000316"/>
    <property type="project" value="MGI"/>
</dbReference>
<dbReference type="GO" id="GO:0110097">
    <property type="term" value="P:regulation of calcium import into the mitochondrion"/>
    <property type="evidence" value="ECO:0000250"/>
    <property type="project" value="UniProtKB"/>
</dbReference>
<dbReference type="GO" id="GO:0099175">
    <property type="term" value="P:regulation of postsynapse organization"/>
    <property type="evidence" value="ECO:0000314"/>
    <property type="project" value="SynGO"/>
</dbReference>
<dbReference type="GO" id="GO:0048167">
    <property type="term" value="P:regulation of synaptic plasticity"/>
    <property type="evidence" value="ECO:0000316"/>
    <property type="project" value="MGI"/>
</dbReference>
<dbReference type="GO" id="GO:0043589">
    <property type="term" value="P:skin morphogenesis"/>
    <property type="evidence" value="ECO:0000315"/>
    <property type="project" value="BHF-UCL"/>
</dbReference>
<dbReference type="GO" id="GO:0001756">
    <property type="term" value="P:somitogenesis"/>
    <property type="evidence" value="ECO:0000316"/>
    <property type="project" value="MGI"/>
</dbReference>
<dbReference type="GO" id="GO:0002286">
    <property type="term" value="P:T cell activation involved in immune response"/>
    <property type="evidence" value="ECO:0000316"/>
    <property type="project" value="MGI"/>
</dbReference>
<dbReference type="GO" id="GO:0050852">
    <property type="term" value="P:T cell receptor signaling pathway"/>
    <property type="evidence" value="ECO:0000316"/>
    <property type="project" value="MGI"/>
</dbReference>
<dbReference type="GO" id="GO:0048538">
    <property type="term" value="P:thymus development"/>
    <property type="evidence" value="ECO:0000316"/>
    <property type="project" value="MGI"/>
</dbReference>
<dbReference type="FunFam" id="1.10.472.100:FF:000001">
    <property type="entry name" value="Presenilin"/>
    <property type="match status" value="1"/>
</dbReference>
<dbReference type="Gene3D" id="1.10.472.100">
    <property type="entry name" value="Presenilin"/>
    <property type="match status" value="1"/>
</dbReference>
<dbReference type="InterPro" id="IPR001493">
    <property type="entry name" value="Pept_A22A_PS2"/>
</dbReference>
<dbReference type="InterPro" id="IPR001108">
    <property type="entry name" value="Peptidase_A22A"/>
</dbReference>
<dbReference type="InterPro" id="IPR006639">
    <property type="entry name" value="Preselin/SPP"/>
</dbReference>
<dbReference type="InterPro" id="IPR042524">
    <property type="entry name" value="Presenilin_C"/>
</dbReference>
<dbReference type="PANTHER" id="PTHR10202">
    <property type="entry name" value="PRESENILIN"/>
    <property type="match status" value="1"/>
</dbReference>
<dbReference type="PANTHER" id="PTHR10202:SF24">
    <property type="entry name" value="PRESENILIN-2"/>
    <property type="match status" value="1"/>
</dbReference>
<dbReference type="Pfam" id="PF01080">
    <property type="entry name" value="Presenilin"/>
    <property type="match status" value="2"/>
</dbReference>
<dbReference type="PRINTS" id="PR01072">
    <property type="entry name" value="PRESENILIN"/>
</dbReference>
<dbReference type="PRINTS" id="PR01074">
    <property type="entry name" value="PRESENILIN2"/>
</dbReference>
<dbReference type="SMART" id="SM00730">
    <property type="entry name" value="PSN"/>
    <property type="match status" value="1"/>
</dbReference>
<comment type="function">
    <text evidence="2 5">Probable catalytic subunit of the gamma-secretase complex, an endoprotease complex that catalyzes the intramembrane cleavage of integral membrane proteins such as Notch receptors and APP (amyloid-beta precursor protein). Requires the other members of the gamma-secretase complex to have a protease activity. May play a role in intracellular signaling and gene expression or in linking chromatin to the nuclear membrane. May function in the cytoplasmic partitioning of proteins (By similarity). The holoprotein functions as a calcium-leak channel that allows the passive movement of calcium from endoplasmic reticulum to cytosol and is involved in calcium homeostasis (PubMed:16959576). Is a regulator of mitochondrion-endoplasmic reticulum membrane tethering and modulates calcium ions shuttling between ER and mitochondria (By similarity).</text>
</comment>
<comment type="subunit">
    <text evidence="1">Homodimer. Component of the gamma-secretase complex, a complex composed of a presenilin homodimer (PSEN1 or PSEN2), nicastrin (NCSTN), APH1 (APH1A or APH1B) and PEN2. Such minimal complex is sufficient for secretase activity, although other components may exist. Interacts with DOCK3. Interacts with HERPUD1, FLNA, FLNB and PARL (By similarity).</text>
</comment>
<comment type="interaction">
    <interactant intactId="EBI-21309044">
        <id>Q61144</id>
    </interactant>
    <interactant intactId="EBI-11720427">
        <id>Q9QXT8</id>
        <label>Kcnip3</label>
    </interactant>
    <organismsDiffer>false</organismsDiffer>
    <experiments>3</experiments>
</comment>
<comment type="interaction">
    <interactant intactId="EBI-21396390">
        <id>PRO_0000025608</id>
    </interactant>
    <interactant intactId="EBI-11720427">
        <id>Q9QXT8</id>
        <label>Kcnip3</label>
    </interactant>
    <organismsDiffer>false</organismsDiffer>
    <experiments>3</experiments>
</comment>
<comment type="subcellular location">
    <subcellularLocation>
        <location evidence="1">Endoplasmic reticulum membrane</location>
        <topology evidence="1">Multi-pass membrane protein</topology>
    </subcellularLocation>
    <subcellularLocation>
        <location evidence="1">Golgi apparatus membrane</location>
        <topology evidence="1">Multi-pass membrane protein</topology>
    </subcellularLocation>
</comment>
<comment type="alternative products">
    <event type="alternative splicing"/>
    <isoform>
        <id>Q61144-1</id>
        <name>1</name>
        <sequence type="displayed"/>
    </isoform>
    <isoform>
        <id>Q61144-2</id>
        <name>2</name>
        <sequence type="described" ref="VSP_008383 VSP_008384"/>
    </isoform>
</comment>
<comment type="tissue specificity">
    <text>Ubiquitously expressed. Highly expressed in the liver.</text>
</comment>
<comment type="domain">
    <text evidence="1">The PAL motif is required for normal active site conformation.</text>
</comment>
<comment type="similarity">
    <text evidence="7">Belongs to the peptidase A22A family.</text>
</comment>
<feature type="chain" id="PRO_0000025607" description="Presenilin-2 NTF subunit" evidence="1">
    <location>
        <begin position="1"/>
        <end position="297"/>
    </location>
</feature>
<feature type="chain" id="PRO_0000025608" description="Presenilin-2 CTF subunit">
    <location>
        <begin position="298"/>
        <end position="448"/>
    </location>
</feature>
<feature type="topological domain" description="Cytoplasmic" evidence="3">
    <location>
        <begin position="1"/>
        <end position="87"/>
    </location>
</feature>
<feature type="transmembrane region" description="Helical" evidence="3">
    <location>
        <begin position="88"/>
        <end position="108"/>
    </location>
</feature>
<feature type="topological domain" description="Lumenal" evidence="3">
    <location>
        <begin position="109"/>
        <end position="138"/>
    </location>
</feature>
<feature type="transmembrane region" description="Helical" evidence="3">
    <location>
        <begin position="139"/>
        <end position="159"/>
    </location>
</feature>
<feature type="topological domain" description="Cytoplasmic" evidence="3">
    <location>
        <begin position="160"/>
        <end position="166"/>
    </location>
</feature>
<feature type="transmembrane region" description="Helical" evidence="3">
    <location>
        <begin position="167"/>
        <end position="187"/>
    </location>
</feature>
<feature type="topological domain" description="Lumenal" evidence="3">
    <location>
        <begin position="188"/>
        <end position="200"/>
    </location>
</feature>
<feature type="transmembrane region" description="Helical" evidence="3">
    <location>
        <begin position="201"/>
        <end position="221"/>
    </location>
</feature>
<feature type="topological domain" description="Cytoplasmic" evidence="3">
    <location>
        <begin position="222"/>
        <end position="223"/>
    </location>
</feature>
<feature type="transmembrane region" description="Helical" evidence="3">
    <location>
        <begin position="224"/>
        <end position="244"/>
    </location>
</feature>
<feature type="topological domain" description="Lumenal" evidence="3">
    <location>
        <begin position="245"/>
        <end position="249"/>
    </location>
</feature>
<feature type="transmembrane region" description="Helical" evidence="3">
    <location>
        <begin position="250"/>
        <end position="270"/>
    </location>
</feature>
<feature type="topological domain" description="Cytoplasmic" evidence="3">
    <location>
        <begin position="271"/>
        <end position="358"/>
    </location>
</feature>
<feature type="transmembrane region" description="Helical" evidence="3">
    <location>
        <begin position="359"/>
        <end position="379"/>
    </location>
</feature>
<feature type="topological domain" description="Lumenal" evidence="3">
    <location>
        <begin position="380"/>
        <end position="388"/>
    </location>
</feature>
<feature type="transmembrane region" description="Helical" evidence="3">
    <location>
        <begin position="389"/>
        <end position="409"/>
    </location>
</feature>
<feature type="topological domain" description="Cytoplasmic" evidence="3">
    <location>
        <begin position="410"/>
        <end position="413"/>
    </location>
</feature>
<feature type="intramembrane region" description="Helical" evidence="3">
    <location>
        <begin position="414"/>
        <end position="434"/>
    </location>
</feature>
<feature type="topological domain" description="Cytoplasmic" evidence="3">
    <location>
        <begin position="435"/>
        <end position="448"/>
    </location>
</feature>
<feature type="region of interest" description="Disordered" evidence="4">
    <location>
        <begin position="1"/>
        <end position="74"/>
    </location>
</feature>
<feature type="short sequence motif" description="PAL">
    <location>
        <begin position="414"/>
        <end position="416"/>
    </location>
</feature>
<feature type="compositionally biased region" description="Polar residues" evidence="4">
    <location>
        <begin position="19"/>
        <end position="31"/>
    </location>
</feature>
<feature type="active site" evidence="1">
    <location>
        <position position="263"/>
    </location>
</feature>
<feature type="active site" evidence="1">
    <location>
        <position position="366"/>
    </location>
</feature>
<feature type="modified residue" description="Phosphoserine" evidence="10">
    <location>
        <position position="22"/>
    </location>
</feature>
<feature type="modified residue" description="Phosphoserine" evidence="10">
    <location>
        <position position="25"/>
    </location>
</feature>
<feature type="modified residue" description="Phosphoserine" evidence="10">
    <location>
        <position position="30"/>
    </location>
</feature>
<feature type="modified residue" description="Phosphoserine" evidence="8 9 10">
    <location>
        <position position="52"/>
    </location>
</feature>
<feature type="splice variant" id="VSP_008383" description="In isoform 2." evidence="6">
    <original>SAMVWTVGMAKLDPSSQGALQLPYDPEMEEDSYDSFG</original>
    <variation>CEWSHASARHWGVSRWPFVEAWKWAVVLISDRLYILS</variation>
    <location>
        <begin position="296"/>
        <end position="332"/>
    </location>
</feature>
<feature type="splice variant" id="VSP_008384" description="In isoform 2." evidence="6">
    <location>
        <begin position="333"/>
        <end position="448"/>
    </location>
</feature>
<feature type="sequence conflict" description="In Ref. 3; BAB29514." evidence="7" ref="3">
    <original>D</original>
    <variation>G</variation>
    <location>
        <position position="40"/>
    </location>
</feature>
<feature type="sequence conflict" description="In Ref. 3; BAB29514." evidence="7" ref="3">
    <original>KR</original>
    <variation>ND</variation>
    <location>
        <begin position="86"/>
        <end position="87"/>
    </location>
</feature>
<feature type="sequence conflict" description="In Ref. 2 and 4." evidence="7" ref="2 4">
    <original>R</original>
    <variation>H</variation>
    <location>
        <position position="87"/>
    </location>
</feature>
<feature type="sequence conflict" description="In Ref. 1; AAC52937." evidence="7" ref="1">
    <original>V</original>
    <variation>A</variation>
    <location>
        <position position="226"/>
    </location>
</feature>
<feature type="sequence conflict" description="In Ref. 2; AAB92660." evidence="7" ref="2">
    <location>
        <position position="324"/>
    </location>
</feature>
<protein>
    <recommendedName>
        <fullName>Presenilin-2</fullName>
        <shortName>PS-2</shortName>
        <ecNumber>3.4.23.-</ecNumber>
    </recommendedName>
    <component>
        <recommendedName>
            <fullName>Presenilin-2 NTF subunit</fullName>
        </recommendedName>
    </component>
    <component>
        <recommendedName>
            <fullName>Presenilin-2 CTF subunit</fullName>
        </recommendedName>
    </component>
</protein>
<evidence type="ECO:0000250" key="1"/>
<evidence type="ECO:0000250" key="2">
    <source>
        <dbReference type="UniProtKB" id="P49810"/>
    </source>
</evidence>
<evidence type="ECO:0000255" key="3"/>
<evidence type="ECO:0000256" key="4">
    <source>
        <dbReference type="SAM" id="MobiDB-lite"/>
    </source>
</evidence>
<evidence type="ECO:0000269" key="5">
    <source>
    </source>
</evidence>
<evidence type="ECO:0000303" key="6">
    <source>
    </source>
</evidence>
<evidence type="ECO:0000305" key="7"/>
<evidence type="ECO:0007744" key="8">
    <source>
    </source>
</evidence>
<evidence type="ECO:0007744" key="9">
    <source>
    </source>
</evidence>
<evidence type="ECO:0007744" key="10">
    <source>
    </source>
</evidence>
<accession>Q61144</accession>
<accession>O54977</accession>
<accession>P97934</accession>
<accession>P97935</accession>
<accession>Q91VS3</accession>
<accession>Q9D616</accession>
<gene>
    <name type="primary">Psen2</name>
    <name type="synonym">Ad4h</name>
    <name type="synonym">Alg3</name>
    <name type="synonym">Ps-2</name>
    <name type="synonym">Psnl2</name>
</gene>